<protein>
    <recommendedName>
        <fullName evidence="1">Imidazoleglycerol-phosphate dehydratase</fullName>
        <shortName evidence="1">IGPD</shortName>
        <ecNumber evidence="1">4.2.1.19</ecNumber>
    </recommendedName>
</protein>
<dbReference type="EC" id="4.2.1.19" evidence="1"/>
<dbReference type="EMBL" id="CP000527">
    <property type="protein sequence ID" value="ABM28969.1"/>
    <property type="status" value="ALT_INIT"/>
    <property type="molecule type" value="Genomic_DNA"/>
</dbReference>
<dbReference type="RefSeq" id="WP_011792566.1">
    <property type="nucleotide sequence ID" value="NC_008751.1"/>
</dbReference>
<dbReference type="SMR" id="A1VEV3"/>
<dbReference type="KEGG" id="dvl:Dvul_1953"/>
<dbReference type="HOGENOM" id="CLU_044308_3_0_7"/>
<dbReference type="UniPathway" id="UPA00031">
    <property type="reaction ID" value="UER00011"/>
</dbReference>
<dbReference type="Proteomes" id="UP000009173">
    <property type="component" value="Chromosome"/>
</dbReference>
<dbReference type="GO" id="GO:0005737">
    <property type="term" value="C:cytoplasm"/>
    <property type="evidence" value="ECO:0007669"/>
    <property type="project" value="UniProtKB-SubCell"/>
</dbReference>
<dbReference type="GO" id="GO:0004424">
    <property type="term" value="F:imidazoleglycerol-phosphate dehydratase activity"/>
    <property type="evidence" value="ECO:0007669"/>
    <property type="project" value="UniProtKB-UniRule"/>
</dbReference>
<dbReference type="GO" id="GO:0000105">
    <property type="term" value="P:L-histidine biosynthetic process"/>
    <property type="evidence" value="ECO:0007669"/>
    <property type="project" value="UniProtKB-UniRule"/>
</dbReference>
<dbReference type="CDD" id="cd07914">
    <property type="entry name" value="IGPD"/>
    <property type="match status" value="1"/>
</dbReference>
<dbReference type="FunFam" id="3.30.230.40:FF:000003">
    <property type="entry name" value="Imidazoleglycerol-phosphate dehydratase HisB"/>
    <property type="match status" value="1"/>
</dbReference>
<dbReference type="Gene3D" id="3.30.230.40">
    <property type="entry name" value="Imidazole glycerol phosphate dehydratase, domain 1"/>
    <property type="match status" value="2"/>
</dbReference>
<dbReference type="HAMAP" id="MF_00076">
    <property type="entry name" value="HisB"/>
    <property type="match status" value="1"/>
</dbReference>
<dbReference type="InterPro" id="IPR038494">
    <property type="entry name" value="IGPD_sf"/>
</dbReference>
<dbReference type="InterPro" id="IPR000807">
    <property type="entry name" value="ImidazoleglycerolP_deHydtase"/>
</dbReference>
<dbReference type="InterPro" id="IPR020565">
    <property type="entry name" value="ImidazoleglycerP_deHydtase_CS"/>
</dbReference>
<dbReference type="InterPro" id="IPR020568">
    <property type="entry name" value="Ribosomal_Su5_D2-typ_SF"/>
</dbReference>
<dbReference type="NCBIfam" id="NF002114">
    <property type="entry name" value="PRK00951.2-4"/>
    <property type="match status" value="1"/>
</dbReference>
<dbReference type="PANTHER" id="PTHR23133:SF2">
    <property type="entry name" value="IMIDAZOLEGLYCEROL-PHOSPHATE DEHYDRATASE"/>
    <property type="match status" value="1"/>
</dbReference>
<dbReference type="PANTHER" id="PTHR23133">
    <property type="entry name" value="IMIDAZOLEGLYCEROL-PHOSPHATE DEHYDRATASE HIS7"/>
    <property type="match status" value="1"/>
</dbReference>
<dbReference type="Pfam" id="PF00475">
    <property type="entry name" value="IGPD"/>
    <property type="match status" value="1"/>
</dbReference>
<dbReference type="SUPFAM" id="SSF54211">
    <property type="entry name" value="Ribosomal protein S5 domain 2-like"/>
    <property type="match status" value="2"/>
</dbReference>
<dbReference type="PROSITE" id="PS00954">
    <property type="entry name" value="IGP_DEHYDRATASE_1"/>
    <property type="match status" value="1"/>
</dbReference>
<dbReference type="PROSITE" id="PS00955">
    <property type="entry name" value="IGP_DEHYDRATASE_2"/>
    <property type="match status" value="1"/>
</dbReference>
<reference key="1">
    <citation type="journal article" date="2009" name="Environ. Microbiol.">
        <title>Contribution of mobile genetic elements to Desulfovibrio vulgaris genome plasticity.</title>
        <authorList>
            <person name="Walker C.B."/>
            <person name="Stolyar S."/>
            <person name="Chivian D."/>
            <person name="Pinel N."/>
            <person name="Gabster J.A."/>
            <person name="Dehal P.S."/>
            <person name="He Z."/>
            <person name="Yang Z.K."/>
            <person name="Yen H.C."/>
            <person name="Zhou J."/>
            <person name="Wall J.D."/>
            <person name="Hazen T.C."/>
            <person name="Arkin A.P."/>
            <person name="Stahl D.A."/>
        </authorList>
    </citation>
    <scope>NUCLEOTIDE SEQUENCE [LARGE SCALE GENOMIC DNA]</scope>
    <source>
        <strain>DP4</strain>
    </source>
</reference>
<sequence length="198" mass="21787">MQTVARKASVERVTNETTIALTLTIEGEGNVRVTTGFGMLDHMLTLTAFWAGFDLDLTCNGDMHIDAHHTAEDVALCLGQALATALDDRKGIARVGFARVPMDEALAEVTLDISGRPWLEWRGDEYLPPVIAGEEKDLWREFHKAFASAARMNLHVSYLYGKNGHHLLESASKGLGLALRQAVRRDRQTVLSTKGSLD</sequence>
<feature type="chain" id="PRO_0000336313" description="Imidazoleglycerol-phosphate dehydratase">
    <location>
        <begin position="1"/>
        <end position="198"/>
    </location>
</feature>
<proteinExistence type="inferred from homology"/>
<organism>
    <name type="scientific">Nitratidesulfovibrio vulgaris (strain DP4)</name>
    <name type="common">Desulfovibrio vulgaris</name>
    <dbReference type="NCBI Taxonomy" id="391774"/>
    <lineage>
        <taxon>Bacteria</taxon>
        <taxon>Pseudomonadati</taxon>
        <taxon>Thermodesulfobacteriota</taxon>
        <taxon>Desulfovibrionia</taxon>
        <taxon>Desulfovibrionales</taxon>
        <taxon>Desulfovibrionaceae</taxon>
        <taxon>Nitratidesulfovibrio</taxon>
    </lineage>
</organism>
<gene>
    <name evidence="1" type="primary">hisB</name>
    <name type="ordered locus">Dvul_1953</name>
</gene>
<accession>A1VEV3</accession>
<evidence type="ECO:0000255" key="1">
    <source>
        <dbReference type="HAMAP-Rule" id="MF_00076"/>
    </source>
</evidence>
<evidence type="ECO:0000305" key="2"/>
<keyword id="KW-0028">Amino-acid biosynthesis</keyword>
<keyword id="KW-0963">Cytoplasm</keyword>
<keyword id="KW-0368">Histidine biosynthesis</keyword>
<keyword id="KW-0456">Lyase</keyword>
<name>HIS7_NITV4</name>
<comment type="catalytic activity">
    <reaction evidence="1">
        <text>D-erythro-1-(imidazol-4-yl)glycerol 3-phosphate = 3-(imidazol-4-yl)-2-oxopropyl phosphate + H2O</text>
        <dbReference type="Rhea" id="RHEA:11040"/>
        <dbReference type="ChEBI" id="CHEBI:15377"/>
        <dbReference type="ChEBI" id="CHEBI:57766"/>
        <dbReference type="ChEBI" id="CHEBI:58278"/>
        <dbReference type="EC" id="4.2.1.19"/>
    </reaction>
</comment>
<comment type="pathway">
    <text evidence="1">Amino-acid biosynthesis; L-histidine biosynthesis; L-histidine from 5-phospho-alpha-D-ribose 1-diphosphate: step 6/9.</text>
</comment>
<comment type="subcellular location">
    <subcellularLocation>
        <location evidence="1">Cytoplasm</location>
    </subcellularLocation>
</comment>
<comment type="similarity">
    <text evidence="1">Belongs to the imidazoleglycerol-phosphate dehydratase family.</text>
</comment>
<comment type="sequence caution" evidence="2">
    <conflict type="erroneous initiation">
        <sequence resource="EMBL-CDS" id="ABM28969"/>
    </conflict>
</comment>